<comment type="function">
    <text>Kappa-casein stabilizes micelle formation, preventing casein precipitation in milk.</text>
</comment>
<comment type="subcellular location">
    <subcellularLocation>
        <location>Secreted</location>
    </subcellularLocation>
</comment>
<comment type="tissue specificity">
    <text>Mammary gland specific. Secreted in milk.</text>
</comment>
<comment type="similarity">
    <text evidence="4">Belongs to the kappa-casein family.</text>
</comment>
<reference key="1">
    <citation type="journal article" date="1996" name="Mol. Biol. Evol.">
        <title>Evidence from milk casein genes that cetaceans are close relatives of hippopotamid artiodactyls.</title>
        <authorList>
            <person name="Gatesy J."/>
            <person name="Hayashi C."/>
            <person name="Cronin M.A."/>
            <person name="Arctander P."/>
        </authorList>
    </citation>
    <scope>NUCLEOTIDE SEQUENCE [GENOMIC DNA]</scope>
</reference>
<name>CASK_BALPH</name>
<proteinExistence type="evidence at transcript level"/>
<accession>Q27952</accession>
<gene>
    <name type="primary">CSN3</name>
    <name type="synonym">CSN10</name>
    <name type="synonym">CSNK</name>
</gene>
<dbReference type="EMBL" id="U53888">
    <property type="protein sequence ID" value="AAB08404.1"/>
    <property type="molecule type" value="Genomic_DNA"/>
</dbReference>
<dbReference type="GlyCosmos" id="Q27952">
    <property type="glycosylation" value="5 sites, No reported glycans"/>
</dbReference>
<dbReference type="GO" id="GO:0005615">
    <property type="term" value="C:extracellular space"/>
    <property type="evidence" value="ECO:0007669"/>
    <property type="project" value="TreeGrafter"/>
</dbReference>
<dbReference type="GO" id="GO:0007595">
    <property type="term" value="P:lactation"/>
    <property type="evidence" value="ECO:0007669"/>
    <property type="project" value="TreeGrafter"/>
</dbReference>
<dbReference type="GO" id="GO:0050821">
    <property type="term" value="P:protein stabilization"/>
    <property type="evidence" value="ECO:0007669"/>
    <property type="project" value="TreeGrafter"/>
</dbReference>
<dbReference type="InterPro" id="IPR000117">
    <property type="entry name" value="Casein_kappa"/>
</dbReference>
<dbReference type="PANTHER" id="PTHR11470">
    <property type="entry name" value="KAPPA CASEIN"/>
    <property type="match status" value="1"/>
</dbReference>
<dbReference type="PANTHER" id="PTHR11470:SF2">
    <property type="entry name" value="KAPPA-CASEIN"/>
    <property type="match status" value="1"/>
</dbReference>
<dbReference type="Pfam" id="PF00997">
    <property type="entry name" value="Casein_kappa"/>
    <property type="match status" value="1"/>
</dbReference>
<organism>
    <name type="scientific">Balaenoptera physalus</name>
    <name type="common">Fin whale</name>
    <name type="synonym">Balaena physalus</name>
    <dbReference type="NCBI Taxonomy" id="9770"/>
    <lineage>
        <taxon>Eukaryota</taxon>
        <taxon>Metazoa</taxon>
        <taxon>Chordata</taxon>
        <taxon>Craniata</taxon>
        <taxon>Vertebrata</taxon>
        <taxon>Euteleostomi</taxon>
        <taxon>Mammalia</taxon>
        <taxon>Eutheria</taxon>
        <taxon>Laurasiatheria</taxon>
        <taxon>Artiodactyla</taxon>
        <taxon>Whippomorpha</taxon>
        <taxon>Cetacea</taxon>
        <taxon>Mysticeti</taxon>
        <taxon>Balaenopteridae</taxon>
        <taxon>Balaenoptera</taxon>
    </lineage>
</organism>
<sequence>LFNEKTVKYIPIHYVLSRYPSXGLNYYQHRLAALINNQFMPYPYYAKPVAVRPHAQIPQWQFLPNIHPPTVAHHPHPRPSFIAIPPKKTQDKTVIPIINTIATAEPTLIPTTEPIVNTVVTPEASSEFITSTPETTTVQVTSPVV</sequence>
<evidence type="ECO:0000250" key="1"/>
<evidence type="ECO:0000250" key="2">
    <source>
        <dbReference type="UniProtKB" id="P02668"/>
    </source>
</evidence>
<evidence type="ECO:0000250" key="3">
    <source>
        <dbReference type="UniProtKB" id="P02670"/>
    </source>
</evidence>
<evidence type="ECO:0000305" key="4"/>
<protein>
    <recommendedName>
        <fullName>Kappa-casein</fullName>
    </recommendedName>
</protein>
<keyword id="KW-0325">Glycoprotein</keyword>
<keyword id="KW-0494">Milk protein</keyword>
<keyword id="KW-0597">Phosphoprotein</keyword>
<keyword id="KW-0964">Secreted</keyword>
<feature type="chain" id="PRO_0000144102" description="Kappa-casein">
    <location>
        <begin position="1" status="less than"/>
        <end position="145"/>
    </location>
</feature>
<feature type="site" description="Cleavage; by chymosin/rennin" evidence="1">
    <location>
        <begin position="81"/>
        <end position="82"/>
    </location>
</feature>
<feature type="modified residue" description="Phosphothreonine" evidence="2">
    <location>
        <position position="121"/>
    </location>
</feature>
<feature type="modified residue" description="Phosphoserine; alternate" evidence="2">
    <location>
        <position position="125"/>
    </location>
</feature>
<feature type="modified residue" description="Phosphoserine" evidence="3">
    <location>
        <position position="142"/>
    </location>
</feature>
<feature type="glycosylation site" description="O-linked (GalNAc...) threonine" evidence="2">
    <location>
        <position position="107"/>
    </location>
</feature>
<feature type="glycosylation site" description="O-linked (GalNAc...) threonine" evidence="2">
    <location>
        <position position="112"/>
    </location>
</feature>
<feature type="glycosylation site" description="O-linked (GalNAc...) threonine" evidence="2">
    <location>
        <position position="118"/>
    </location>
</feature>
<feature type="glycosylation site" description="O-linked (GalNAc...) serine; alternate" evidence="2">
    <location>
        <position position="125"/>
    </location>
</feature>
<feature type="glycosylation site" description="O-linked (GalNAc...) threonine" evidence="2">
    <location>
        <position position="141"/>
    </location>
</feature>
<feature type="non-terminal residue">
    <location>
        <position position="1"/>
    </location>
</feature>